<gene>
    <name type="primary">spt8</name>
    <name type="synonym">sep9</name>
    <name type="ORF">SPBC14C8.17c</name>
</gene>
<reference key="1">
    <citation type="journal article" date="2002" name="Nature">
        <title>The genome sequence of Schizosaccharomyces pombe.</title>
        <authorList>
            <person name="Wood V."/>
            <person name="Gwilliam R."/>
            <person name="Rajandream M.A."/>
            <person name="Lyne M.H."/>
            <person name="Lyne R."/>
            <person name="Stewart A."/>
            <person name="Sgouros J.G."/>
            <person name="Peat N."/>
            <person name="Hayles J."/>
            <person name="Baker S.G."/>
            <person name="Basham D."/>
            <person name="Bowman S."/>
            <person name="Brooks K."/>
            <person name="Brown D."/>
            <person name="Brown S."/>
            <person name="Chillingworth T."/>
            <person name="Churcher C.M."/>
            <person name="Collins M."/>
            <person name="Connor R."/>
            <person name="Cronin A."/>
            <person name="Davis P."/>
            <person name="Feltwell T."/>
            <person name="Fraser A."/>
            <person name="Gentles S."/>
            <person name="Goble A."/>
            <person name="Hamlin N."/>
            <person name="Harris D.E."/>
            <person name="Hidalgo J."/>
            <person name="Hodgson G."/>
            <person name="Holroyd S."/>
            <person name="Hornsby T."/>
            <person name="Howarth S."/>
            <person name="Huckle E.J."/>
            <person name="Hunt S."/>
            <person name="Jagels K."/>
            <person name="James K.D."/>
            <person name="Jones L."/>
            <person name="Jones M."/>
            <person name="Leather S."/>
            <person name="McDonald S."/>
            <person name="McLean J."/>
            <person name="Mooney P."/>
            <person name="Moule S."/>
            <person name="Mungall K.L."/>
            <person name="Murphy L.D."/>
            <person name="Niblett D."/>
            <person name="Odell C."/>
            <person name="Oliver K."/>
            <person name="O'Neil S."/>
            <person name="Pearson D."/>
            <person name="Quail M.A."/>
            <person name="Rabbinowitsch E."/>
            <person name="Rutherford K.M."/>
            <person name="Rutter S."/>
            <person name="Saunders D."/>
            <person name="Seeger K."/>
            <person name="Sharp S."/>
            <person name="Skelton J."/>
            <person name="Simmonds M.N."/>
            <person name="Squares R."/>
            <person name="Squares S."/>
            <person name="Stevens K."/>
            <person name="Taylor K."/>
            <person name="Taylor R.G."/>
            <person name="Tivey A."/>
            <person name="Walsh S.V."/>
            <person name="Warren T."/>
            <person name="Whitehead S."/>
            <person name="Woodward J.R."/>
            <person name="Volckaert G."/>
            <person name="Aert R."/>
            <person name="Robben J."/>
            <person name="Grymonprez B."/>
            <person name="Weltjens I."/>
            <person name="Vanstreels E."/>
            <person name="Rieger M."/>
            <person name="Schaefer M."/>
            <person name="Mueller-Auer S."/>
            <person name="Gabel C."/>
            <person name="Fuchs M."/>
            <person name="Duesterhoeft A."/>
            <person name="Fritzc C."/>
            <person name="Holzer E."/>
            <person name="Moestl D."/>
            <person name="Hilbert H."/>
            <person name="Borzym K."/>
            <person name="Langer I."/>
            <person name="Beck A."/>
            <person name="Lehrach H."/>
            <person name="Reinhardt R."/>
            <person name="Pohl T.M."/>
            <person name="Eger P."/>
            <person name="Zimmermann W."/>
            <person name="Wedler H."/>
            <person name="Wambutt R."/>
            <person name="Purnelle B."/>
            <person name="Goffeau A."/>
            <person name="Cadieu E."/>
            <person name="Dreano S."/>
            <person name="Gloux S."/>
            <person name="Lelaure V."/>
            <person name="Mottier S."/>
            <person name="Galibert F."/>
            <person name="Aves S.J."/>
            <person name="Xiang Z."/>
            <person name="Hunt C."/>
            <person name="Moore K."/>
            <person name="Hurst S.M."/>
            <person name="Lucas M."/>
            <person name="Rochet M."/>
            <person name="Gaillardin C."/>
            <person name="Tallada V.A."/>
            <person name="Garzon A."/>
            <person name="Thode G."/>
            <person name="Daga R.R."/>
            <person name="Cruzado L."/>
            <person name="Jimenez J."/>
            <person name="Sanchez M."/>
            <person name="del Rey F."/>
            <person name="Benito J."/>
            <person name="Dominguez A."/>
            <person name="Revuelta J.L."/>
            <person name="Moreno S."/>
            <person name="Armstrong J."/>
            <person name="Forsburg S.L."/>
            <person name="Cerutti L."/>
            <person name="Lowe T."/>
            <person name="McCombie W.R."/>
            <person name="Paulsen I."/>
            <person name="Potashkin J."/>
            <person name="Shpakovski G.V."/>
            <person name="Ussery D."/>
            <person name="Barrell B.G."/>
            <person name="Nurse P."/>
        </authorList>
    </citation>
    <scope>NUCLEOTIDE SEQUENCE [LARGE SCALE GENOMIC DNA]</scope>
    <source>
        <strain>972 / ATCC 24843</strain>
    </source>
</reference>
<reference key="2">
    <citation type="journal article" date="2006" name="Nat. Biotechnol.">
        <title>ORFeome cloning and global analysis of protein localization in the fission yeast Schizosaccharomyces pombe.</title>
        <authorList>
            <person name="Matsuyama A."/>
            <person name="Arai R."/>
            <person name="Yashiroda Y."/>
            <person name="Shirai A."/>
            <person name="Kamata A."/>
            <person name="Sekido S."/>
            <person name="Kobayashi Y."/>
            <person name="Hashimoto A."/>
            <person name="Hamamoto M."/>
            <person name="Hiraoka Y."/>
            <person name="Horinouchi S."/>
            <person name="Yoshida M."/>
        </authorList>
    </citation>
    <scope>SUBCELLULAR LOCATION [LARGE SCALE ANALYSIS]</scope>
</reference>
<reference key="3">
    <citation type="journal article" date="2008" name="Genes Dev.">
        <title>The S. pombe SAGA complex controls the switch from proliferation to sexual differentiation through the opposing roles of its subunits Gcn5 and Spt8.</title>
        <authorList>
            <person name="Helmlinger D."/>
            <person name="Marguerat S."/>
            <person name="Villen J."/>
            <person name="Gygi S.P."/>
            <person name="Bahler J."/>
            <person name="Winston F."/>
        </authorList>
    </citation>
    <scope>IDENTIFICATION IN THE SAGA COMPLEX</scope>
    <scope>IDENTIFICATION BY MASS SPECTROMETRY</scope>
    <scope>FUNCTION</scope>
</reference>
<sequence>MEAEESESFSYPMLLPSDGLYPEDDDDADMDQDKNPEENVMNEKEDEDVDAVDEKSGEEDVEMDTMEDENENDEDTEQTSEKKETEETPKENPLEKLKQKASTASFYDVVPTLAIPMATSINAFAFTSDLKWLFTGGEDGYIRKYDFFPSINGDLSLTVAQRHPFVDTVTKAGILLNYWENAYDGNKPSSVYSLAAHSRGLWVLSGVNNGDIILYSTRHQEGYPVTSLKKHTAPVSCLALHGSEKKVLSGSWDKMVYYWDLNTGDAISTYNCESGQISNIVYRPSGAVNPWGSESDDMRSLFGTPASSSSYDALFDEEVEKAIEEETKSVQANEENETEKPSQTESTTNNDNIKAPSESSSEESNIFLTTSIDGVMNVWDHRMVDSVLKYPVPKGVPPWAMSACWSPDGNNIYIGRRNGIVEEYNIHSGKEPVRSLKMPLDSGPVSNVYSMPNGRHLVISSFDNIRLYDLQSKAGIGFLIIPGHHGGLVSSLYVDTSCQFMFSASGNRGWQGTTTEVFLGYQIMTS</sequence>
<dbReference type="EMBL" id="CU329671">
    <property type="protein sequence ID" value="CAA18434.1"/>
    <property type="molecule type" value="Genomic_DNA"/>
</dbReference>
<dbReference type="PIR" id="T39445">
    <property type="entry name" value="T39445"/>
</dbReference>
<dbReference type="RefSeq" id="NP_595920.1">
    <property type="nucleotide sequence ID" value="NM_001021828.2"/>
</dbReference>
<dbReference type="SMR" id="O60097"/>
<dbReference type="BioGRID" id="276326">
    <property type="interactions" value="15"/>
</dbReference>
<dbReference type="FunCoup" id="O60097">
    <property type="interactions" value="55"/>
</dbReference>
<dbReference type="IntAct" id="O60097">
    <property type="interactions" value="2"/>
</dbReference>
<dbReference type="MINT" id="O60097"/>
<dbReference type="STRING" id="284812.O60097"/>
<dbReference type="iPTMnet" id="O60097"/>
<dbReference type="SwissPalm" id="O60097"/>
<dbReference type="PaxDb" id="4896-SPBC14C8.17c.1"/>
<dbReference type="EnsemblFungi" id="SPBC14C8.17c.1">
    <property type="protein sequence ID" value="SPBC14C8.17c.1:pep"/>
    <property type="gene ID" value="SPBC14C8.17c"/>
</dbReference>
<dbReference type="GeneID" id="2539775"/>
<dbReference type="KEGG" id="spo:2539775"/>
<dbReference type="PomBase" id="SPBC14C8.17c">
    <property type="gene designation" value="spt8"/>
</dbReference>
<dbReference type="VEuPathDB" id="FungiDB:SPBC14C8.17c"/>
<dbReference type="eggNOG" id="ENOG502QS8F">
    <property type="taxonomic scope" value="Eukaryota"/>
</dbReference>
<dbReference type="HOGENOM" id="CLU_010934_1_0_1"/>
<dbReference type="InParanoid" id="O60097"/>
<dbReference type="OMA" id="WDRRQPN"/>
<dbReference type="PhylomeDB" id="O60097"/>
<dbReference type="PRO" id="PR:O60097"/>
<dbReference type="Proteomes" id="UP000002485">
    <property type="component" value="Chromosome II"/>
</dbReference>
<dbReference type="GO" id="GO:0000785">
    <property type="term" value="C:chromatin"/>
    <property type="evidence" value="ECO:0000314"/>
    <property type="project" value="PomBase"/>
</dbReference>
<dbReference type="GO" id="GO:0005829">
    <property type="term" value="C:cytosol"/>
    <property type="evidence" value="ECO:0007005"/>
    <property type="project" value="PomBase"/>
</dbReference>
<dbReference type="GO" id="GO:0005634">
    <property type="term" value="C:nucleus"/>
    <property type="evidence" value="ECO:0007005"/>
    <property type="project" value="PomBase"/>
</dbReference>
<dbReference type="GO" id="GO:0000124">
    <property type="term" value="C:SAGA complex"/>
    <property type="evidence" value="ECO:0000314"/>
    <property type="project" value="PomBase"/>
</dbReference>
<dbReference type="GO" id="GO:0003713">
    <property type="term" value="F:transcription coactivator activity"/>
    <property type="evidence" value="ECO:0000266"/>
    <property type="project" value="PomBase"/>
</dbReference>
<dbReference type="GO" id="GO:1900237">
    <property type="term" value="P:positive regulation of induction of conjugation with cellular fusion"/>
    <property type="evidence" value="ECO:0000315"/>
    <property type="project" value="PomBase"/>
</dbReference>
<dbReference type="GO" id="GO:0006357">
    <property type="term" value="P:regulation of transcription by RNA polymerase II"/>
    <property type="evidence" value="ECO:0000269"/>
    <property type="project" value="PomBase"/>
</dbReference>
<dbReference type="GO" id="GO:0045815">
    <property type="term" value="P:transcription initiation-coupled chromatin remodeling"/>
    <property type="evidence" value="ECO:0000304"/>
    <property type="project" value="PomBase"/>
</dbReference>
<dbReference type="FunFam" id="2.130.10.10:FF:000925">
    <property type="entry name" value="Transcription factor SPT8"/>
    <property type="match status" value="1"/>
</dbReference>
<dbReference type="Gene3D" id="2.130.10.10">
    <property type="entry name" value="YVTN repeat-like/Quinoprotein amine dehydrogenase"/>
    <property type="match status" value="2"/>
</dbReference>
<dbReference type="InterPro" id="IPR015943">
    <property type="entry name" value="WD40/YVTN_repeat-like_dom_sf"/>
</dbReference>
<dbReference type="InterPro" id="IPR036322">
    <property type="entry name" value="WD40_repeat_dom_sf"/>
</dbReference>
<dbReference type="InterPro" id="IPR001680">
    <property type="entry name" value="WD40_rpt"/>
</dbReference>
<dbReference type="PANTHER" id="PTHR22847:SF735">
    <property type="entry name" value="AFR153WP"/>
    <property type="match status" value="1"/>
</dbReference>
<dbReference type="PANTHER" id="PTHR22847">
    <property type="entry name" value="WD40 REPEAT PROTEIN"/>
    <property type="match status" value="1"/>
</dbReference>
<dbReference type="Pfam" id="PF23798">
    <property type="entry name" value="Beta-prop_SPT8"/>
    <property type="match status" value="1"/>
</dbReference>
<dbReference type="SMART" id="SM00320">
    <property type="entry name" value="WD40"/>
    <property type="match status" value="6"/>
</dbReference>
<dbReference type="SUPFAM" id="SSF50978">
    <property type="entry name" value="WD40 repeat-like"/>
    <property type="match status" value="1"/>
</dbReference>
<dbReference type="PROSITE" id="PS50082">
    <property type="entry name" value="WD_REPEATS_2"/>
    <property type="match status" value="1"/>
</dbReference>
<dbReference type="PROSITE" id="PS50294">
    <property type="entry name" value="WD_REPEATS_REGION"/>
    <property type="match status" value="1"/>
</dbReference>
<evidence type="ECO:0000250" key="1">
    <source>
        <dbReference type="UniProtKB" id="P38915"/>
    </source>
</evidence>
<evidence type="ECO:0000256" key="2">
    <source>
        <dbReference type="SAM" id="MobiDB-lite"/>
    </source>
</evidence>
<evidence type="ECO:0000269" key="3">
    <source>
    </source>
</evidence>
<evidence type="ECO:0000269" key="4">
    <source>
    </source>
</evidence>
<evidence type="ECO:0000305" key="5"/>
<feature type="chain" id="PRO_0000358862" description="SAGA complex subunit Spt8">
    <location>
        <begin position="1"/>
        <end position="526"/>
    </location>
</feature>
<feature type="repeat" description="WD 1">
    <location>
        <begin position="116"/>
        <end position="155"/>
    </location>
</feature>
<feature type="repeat" description="WD 2">
    <location>
        <begin position="186"/>
        <end position="225"/>
    </location>
</feature>
<feature type="repeat" description="WD 3">
    <location>
        <begin position="230"/>
        <end position="271"/>
    </location>
</feature>
<feature type="repeat" description="WD 4">
    <location>
        <begin position="348"/>
        <end position="389"/>
    </location>
</feature>
<feature type="repeat" description="WD 5">
    <location>
        <begin position="395"/>
        <end position="434"/>
    </location>
</feature>
<feature type="repeat" description="WD 6">
    <location>
        <begin position="440"/>
        <end position="478"/>
    </location>
</feature>
<feature type="region of interest" description="Disordered" evidence="2">
    <location>
        <begin position="1"/>
        <end position="98"/>
    </location>
</feature>
<feature type="region of interest" description="Disordered" evidence="2">
    <location>
        <begin position="327"/>
        <end position="364"/>
    </location>
</feature>
<feature type="compositionally biased region" description="Acidic residues" evidence="2">
    <location>
        <begin position="21"/>
        <end position="30"/>
    </location>
</feature>
<feature type="compositionally biased region" description="Basic and acidic residues" evidence="2">
    <location>
        <begin position="31"/>
        <end position="43"/>
    </location>
</feature>
<feature type="compositionally biased region" description="Acidic residues" evidence="2">
    <location>
        <begin position="44"/>
        <end position="78"/>
    </location>
</feature>
<feature type="compositionally biased region" description="Basic and acidic residues" evidence="2">
    <location>
        <begin position="79"/>
        <end position="98"/>
    </location>
</feature>
<feature type="compositionally biased region" description="Polar residues" evidence="2">
    <location>
        <begin position="341"/>
        <end position="364"/>
    </location>
</feature>
<name>SPT8_SCHPO</name>
<protein>
    <recommendedName>
        <fullName>SAGA complex subunit Spt8</fullName>
    </recommendedName>
    <alternativeName>
        <fullName>Transcription factor spt8</fullName>
    </alternativeName>
</protein>
<proteinExistence type="evidence at protein level"/>
<comment type="function">
    <text evidence="1 4">Component of the transcription coactivator SAGA complex. SAGA acts as a general cofactor required for essentially all RNA polymerase II transcription. At the promoters, SAGA is required for transcription pre-initiation complex (PIC) recruitment. It influences RNA polymerase II transcriptional activity through different activities such as TBP interaction (via core/TAF module) and promoter selectivity, interaction with transcription activators (via Tra1/SPT module), and chromatin modification through histone acetylation (via HAT module) and deubiquitination (via DUB module). SAGA preferentially acetylates histones H3 (to form H3K9ac, H3K14ac, H3K18ac and H3K23ac) and H2B and deubiquitinates histone H2B. SAGA interacts with DNA via upstream activating sequences (UASs). During SAGA-mediated transcriptional inhibition, spt3 and spt8 prevent binding of TBP to the TATA box (By similarity). As part of the HAT module, involved in positive regulation of matings (PubMed:19056896).</text>
</comment>
<comment type="subunit">
    <text evidence="1 4">Component of the 1.8 MDa SAGA (Spt-Ada-Gcn5 acetyltransferase) complex, which is composed of 19 subunits tra1, spt7, taf5, ngg1/ada3, sgf73, spt20, spt8, taf12, taf6, hfi1/ada1, ubp8, gcn5, ada2, spt3, sgf29, taf10, taf9, sgf11 and sus1 (PubMed:19056896). The SAGA complex is composed of 4 modules, namely the HAT (histone acetyltransferase) module (gcn5, ada2, ngg1/ada3 and sgf29), the DUB (deubiquitinating) module (ubp8, sgf11, sgf73 and sus1), the core or TAF (TBP-associated factor) module (taf5, taf6, taf9, taf10 and taf12), and the Tra1 or SPT (Suppressor of Ty) module (tra1, hfi1/ada1, spt3, spt7, spt8 and spt20). The Tra1/SPT module binds activators, the core module recruits TBP (TATA-binding protein), the HAT module contains the histone H3 acetyltransferase gcn5, and the DUB module comprises the histone H2B deubiquitinase ubp8 (By similarity).</text>
</comment>
<comment type="subcellular location">
    <subcellularLocation>
        <location evidence="3">Cytoplasm</location>
    </subcellularLocation>
    <subcellularLocation>
        <location evidence="3">Nucleus</location>
    </subcellularLocation>
</comment>
<comment type="similarity">
    <text evidence="5">Belongs to the WD repeat SPT8 family.</text>
</comment>
<accession>O60097</accession>
<keyword id="KW-0963">Cytoplasm</keyword>
<keyword id="KW-0539">Nucleus</keyword>
<keyword id="KW-0597">Phosphoprotein</keyword>
<keyword id="KW-1185">Reference proteome</keyword>
<keyword id="KW-0677">Repeat</keyword>
<keyword id="KW-0804">Transcription</keyword>
<keyword id="KW-0805">Transcription regulation</keyword>
<keyword id="KW-0853">WD repeat</keyword>
<organism>
    <name type="scientific">Schizosaccharomyces pombe (strain 972 / ATCC 24843)</name>
    <name type="common">Fission yeast</name>
    <dbReference type="NCBI Taxonomy" id="284812"/>
    <lineage>
        <taxon>Eukaryota</taxon>
        <taxon>Fungi</taxon>
        <taxon>Dikarya</taxon>
        <taxon>Ascomycota</taxon>
        <taxon>Taphrinomycotina</taxon>
        <taxon>Schizosaccharomycetes</taxon>
        <taxon>Schizosaccharomycetales</taxon>
        <taxon>Schizosaccharomycetaceae</taxon>
        <taxon>Schizosaccharomyces</taxon>
    </lineage>
</organism>